<keyword id="KW-1185">Reference proteome</keyword>
<dbReference type="EMBL" id="U00096">
    <property type="protein sequence ID" value="QNV50542.1"/>
    <property type="molecule type" value="Genomic_DNA"/>
</dbReference>
<dbReference type="InParanoid" id="P0DSG7"/>
<dbReference type="BioCyc" id="EcoCyc:MONOMER0-4501"/>
<dbReference type="Proteomes" id="UP000000625">
    <property type="component" value="Chromosome"/>
</dbReference>
<accession>P0DSG7</accession>
<accession>A0A7H2C795</accession>
<reference key="1">
    <citation type="journal article" date="1997" name="Science">
        <title>The complete genome sequence of Escherichia coli K-12.</title>
        <authorList>
            <person name="Blattner F.R."/>
            <person name="Plunkett G. III"/>
            <person name="Bloch C.A."/>
            <person name="Perna N.T."/>
            <person name="Burland V."/>
            <person name="Riley M."/>
            <person name="Collado-Vides J."/>
            <person name="Glasner J.D."/>
            <person name="Rode C.K."/>
            <person name="Mayhew G.F."/>
            <person name="Gregor J."/>
            <person name="Davis N.W."/>
            <person name="Kirkpatrick H.A."/>
            <person name="Goeden M.A."/>
            <person name="Rose D.J."/>
            <person name="Mau B."/>
            <person name="Shao Y."/>
        </authorList>
    </citation>
    <scope>NUCLEOTIDE SEQUENCE [LARGE SCALE GENOMIC DNA]</scope>
    <source>
        <strain>K12 / MG1655 / ATCC 47076</strain>
    </source>
</reference>
<reference key="2">
    <citation type="journal article" date="2019" name="MBio">
        <title>Identifying small proteins by ribosome profiling with stalled initiation complexes.</title>
        <authorList>
            <person name="Weaver J."/>
            <person name="Mohammad F."/>
            <person name="Buskirk A.R."/>
            <person name="Storz G."/>
        </authorList>
    </citation>
    <scope>IDENTIFICATION</scope>
    <scope>INDUCTION</scope>
    <source>
        <strain>K12 / MG1655 / ATCC 47076</strain>
    </source>
</reference>
<reference key="3">
    <citation type="journal article" date="2022" name="J. Bacteriol.">
        <title>Identification of novel translated small ORFs in Escherichia coli using complementary ribosome profiling approaches.</title>
        <authorList>
            <person name="Stringer A."/>
            <person name="Smith C."/>
            <person name="Mangano K."/>
            <person name="Wade J.T."/>
        </authorList>
    </citation>
    <scope>INDUCTION</scope>
    <source>
        <strain>K12 / MG1655 / ATCC 47076</strain>
    </source>
</reference>
<protein>
    <recommendedName>
        <fullName evidence="3">Protein YhgP</fullName>
    </recommendedName>
</protein>
<organism>
    <name type="scientific">Escherichia coli (strain K12)</name>
    <dbReference type="NCBI Taxonomy" id="83333"/>
    <lineage>
        <taxon>Bacteria</taxon>
        <taxon>Pseudomonadati</taxon>
        <taxon>Pseudomonadota</taxon>
        <taxon>Gammaproteobacteria</taxon>
        <taxon>Enterobacterales</taxon>
        <taxon>Enterobacteriaceae</taxon>
        <taxon>Escherichia</taxon>
    </lineage>
</organism>
<feature type="chain" id="PRO_0000447149" description="Protein YhgP">
    <location>
        <begin position="1"/>
        <end position="9"/>
    </location>
</feature>
<sequence length="9" mass="1043">MFHDLPGVK</sequence>
<evidence type="ECO:0000269" key="1">
    <source>
    </source>
</evidence>
<evidence type="ECO:0000269" key="2">
    <source>
    </source>
</evidence>
<evidence type="ECO:0000303" key="3">
    <source>
    </source>
</evidence>
<evidence type="ECO:0000312" key="4">
    <source>
        <dbReference type="EMBL" id="QNV50542.1"/>
    </source>
</evidence>
<gene>
    <name evidence="3" type="primary">yhgP</name>
    <name evidence="4" type="ordered locus">b4789</name>
</gene>
<comment type="induction">
    <text evidence="1 2">Expressed at high levels equally in exponential and stationary phase in rich medium (at protein level) (PubMed:30837344). More protein is seen when cells are grown in bortezomib, an inhibitor of the ClpP protease (at protein level) (PubMed:34662240).</text>
</comment>
<comment type="miscellaneous">
    <text evidence="1">This gene overlaps yhgO on the same strand in another reading frame.</text>
</comment>
<proteinExistence type="evidence at protein level"/>
<name>YHGP_ECOLI</name>